<feature type="chain" id="PRO_0000077477" description="Photosystem II CP47 reaction center protein">
    <location>
        <begin position="1"/>
        <end position="508"/>
    </location>
</feature>
<feature type="transmembrane region" description="Helical" evidence="1">
    <location>
        <begin position="21"/>
        <end position="36"/>
    </location>
</feature>
<feature type="transmembrane region" description="Helical" evidence="1">
    <location>
        <begin position="101"/>
        <end position="115"/>
    </location>
</feature>
<feature type="transmembrane region" description="Helical" evidence="1">
    <location>
        <begin position="140"/>
        <end position="156"/>
    </location>
</feature>
<feature type="transmembrane region" description="Helical" evidence="1">
    <location>
        <begin position="203"/>
        <end position="218"/>
    </location>
</feature>
<feature type="transmembrane region" description="Helical" evidence="1">
    <location>
        <begin position="237"/>
        <end position="252"/>
    </location>
</feature>
<feature type="transmembrane region" description="Helical" evidence="1">
    <location>
        <begin position="457"/>
        <end position="472"/>
    </location>
</feature>
<gene>
    <name evidence="1" type="primary">psbB</name>
</gene>
<geneLocation type="chloroplast"/>
<organism>
    <name type="scientific">Chlorella vulgaris</name>
    <name type="common">Green alga</name>
    <dbReference type="NCBI Taxonomy" id="3077"/>
    <lineage>
        <taxon>Eukaryota</taxon>
        <taxon>Viridiplantae</taxon>
        <taxon>Chlorophyta</taxon>
        <taxon>core chlorophytes</taxon>
        <taxon>Trebouxiophyceae</taxon>
        <taxon>Chlorellales</taxon>
        <taxon>Chlorellaceae</taxon>
        <taxon>Chlorella clade</taxon>
        <taxon>Chlorella</taxon>
    </lineage>
</organism>
<evidence type="ECO:0000255" key="1">
    <source>
        <dbReference type="HAMAP-Rule" id="MF_01495"/>
    </source>
</evidence>
<dbReference type="EMBL" id="AB001684">
    <property type="protein sequence ID" value="BAA57925.1"/>
    <property type="molecule type" value="Genomic_DNA"/>
</dbReference>
<dbReference type="PIR" id="T07277">
    <property type="entry name" value="T07277"/>
</dbReference>
<dbReference type="RefSeq" id="NP_045849.1">
    <property type="nucleotide sequence ID" value="NC_001865.1"/>
</dbReference>
<dbReference type="SMR" id="P56307"/>
<dbReference type="GeneID" id="809112"/>
<dbReference type="GO" id="GO:0009535">
    <property type="term" value="C:chloroplast thylakoid membrane"/>
    <property type="evidence" value="ECO:0007669"/>
    <property type="project" value="UniProtKB-SubCell"/>
</dbReference>
<dbReference type="GO" id="GO:0009523">
    <property type="term" value="C:photosystem II"/>
    <property type="evidence" value="ECO:0007669"/>
    <property type="project" value="UniProtKB-KW"/>
</dbReference>
<dbReference type="GO" id="GO:0016168">
    <property type="term" value="F:chlorophyll binding"/>
    <property type="evidence" value="ECO:0007669"/>
    <property type="project" value="UniProtKB-UniRule"/>
</dbReference>
<dbReference type="GO" id="GO:0045156">
    <property type="term" value="F:electron transporter, transferring electrons within the cyclic electron transport pathway of photosynthesis activity"/>
    <property type="evidence" value="ECO:0007669"/>
    <property type="project" value="InterPro"/>
</dbReference>
<dbReference type="GO" id="GO:0009772">
    <property type="term" value="P:photosynthetic electron transport in photosystem II"/>
    <property type="evidence" value="ECO:0007669"/>
    <property type="project" value="InterPro"/>
</dbReference>
<dbReference type="FunFam" id="3.10.680.10:FF:000001">
    <property type="entry name" value="Photosystem II CP47 reaction center protein"/>
    <property type="match status" value="1"/>
</dbReference>
<dbReference type="Gene3D" id="3.10.680.10">
    <property type="entry name" value="Photosystem II CP47 reaction center protein"/>
    <property type="match status" value="1"/>
</dbReference>
<dbReference type="HAMAP" id="MF_01495">
    <property type="entry name" value="PSII_PsbB_CP47"/>
    <property type="match status" value="1"/>
</dbReference>
<dbReference type="InterPro" id="IPR000932">
    <property type="entry name" value="PS_antenna-like"/>
</dbReference>
<dbReference type="InterPro" id="IPR036001">
    <property type="entry name" value="PS_II_antenna-like_sf"/>
</dbReference>
<dbReference type="InterPro" id="IPR017486">
    <property type="entry name" value="PSII_PsbB"/>
</dbReference>
<dbReference type="NCBIfam" id="TIGR03039">
    <property type="entry name" value="PS_II_CP47"/>
    <property type="match status" value="1"/>
</dbReference>
<dbReference type="Pfam" id="PF00421">
    <property type="entry name" value="PSII"/>
    <property type="match status" value="1"/>
</dbReference>
<dbReference type="SUPFAM" id="SSF161077">
    <property type="entry name" value="Photosystem II antenna protein-like"/>
    <property type="match status" value="1"/>
</dbReference>
<keyword id="KW-0148">Chlorophyll</keyword>
<keyword id="KW-0150">Chloroplast</keyword>
<keyword id="KW-0157">Chromophore</keyword>
<keyword id="KW-0472">Membrane</keyword>
<keyword id="KW-0602">Photosynthesis</keyword>
<keyword id="KW-0604">Photosystem II</keyword>
<keyword id="KW-0934">Plastid</keyword>
<keyword id="KW-0793">Thylakoid</keyword>
<keyword id="KW-0812">Transmembrane</keyword>
<keyword id="KW-1133">Transmembrane helix</keyword>
<comment type="function">
    <text evidence="1">One of the components of the core complex of photosystem II (PSII). It binds chlorophyll and helps catalyze the primary light-induced photochemical processes of PSII. PSII is a light-driven water:plastoquinone oxidoreductase, using light energy to abstract electrons from H(2)O, generating O(2) and a proton gradient subsequently used for ATP formation.</text>
</comment>
<comment type="cofactor">
    <text evidence="1">Binds multiple chlorophylls. PSII binds additional chlorophylls, carotenoids and specific lipids.</text>
</comment>
<comment type="subunit">
    <text evidence="1">PSII is composed of 1 copy each of membrane proteins PsbA, PsbB, PsbC, PsbD, PsbE, PsbF, PsbH, PsbI, PsbJ, PsbK, PsbL, PsbM, PsbT, PsbX, PsbY, PsbZ, Psb30/Ycf12, at least 3 peripheral proteins of the oxygen-evolving complex and a large number of cofactors. It forms dimeric complexes.</text>
</comment>
<comment type="subcellular location">
    <subcellularLocation>
        <location evidence="1">Plastid</location>
        <location evidence="1">Chloroplast thylakoid membrane</location>
        <topology evidence="1">Multi-pass membrane protein</topology>
    </subcellularLocation>
</comment>
<comment type="similarity">
    <text evidence="1">Belongs to the PsbB/PsbC family. PsbB subfamily.</text>
</comment>
<accession>P56307</accession>
<protein>
    <recommendedName>
        <fullName evidence="1">Photosystem II CP47 reaction center protein</fullName>
    </recommendedName>
    <alternativeName>
        <fullName evidence="1">PSII 47 kDa protein</fullName>
    </alternativeName>
    <alternativeName>
        <fullName evidence="1">Protein CP-47</fullName>
    </alternativeName>
</protein>
<sequence>MGLPWYRVHTVVLNDPGRLIAVHLMHTSLVSGWAGSMAFYELAVFDPSDPVLNPMWRQGMFVLPFMTRLGITQSWGGWTISGETAANPGVWSYEGVAAAHIVLSGLLFAASIWHWVYWDLELFRDPRTSNPALDLPKIFGIHLFLSGVLCFGFGAFHVTGIFGPGIWVSDPYGITGTVQAVAPSWDATGFDPYNPGGISAHHIAAGILGVLAGLFHLCVRPPQRLYNGLRMGNIETVLSSSIAAVFWAAFVVSGTMWYGSAATPIELFGPTRYQWDLGFFQQEIERRVQTNLSEGKSASQAWAEIPEKLAFYDYIGNNPAKGGLFRAGAMNSGDGIAVGWLGHAVFKEKQGNELFVRRMPTFFETFPVVLVDKDGVVRADVPFRRSESKYSIEQVGVSVTFYGGELDGVTFNDPATVKKYARRAQLGEIFEFDRATLQSDGVFRASPRGWFTFAHLCFALLFFFGHIWHGARTIFRDVFAGIDADLDEQVEFGAFLKLGDTSTRRQSV</sequence>
<reference key="1">
    <citation type="journal article" date="1997" name="Proc. Natl. Acad. Sci. U.S.A.">
        <title>Complete nucleotide sequence of the chloroplast genome from the green alga Chlorella vulgaris: the existence of genes possibly involved in chloroplast division.</title>
        <authorList>
            <person name="Wakasugi T."/>
            <person name="Nagai T."/>
            <person name="Kapoor M."/>
            <person name="Sugita M."/>
            <person name="Ito M."/>
            <person name="Ito S."/>
            <person name="Tsudzuki J."/>
            <person name="Nakashima K."/>
            <person name="Tsudzuki T."/>
            <person name="Suzuki Y."/>
            <person name="Hamada A."/>
            <person name="Ohta T."/>
            <person name="Inamura A."/>
            <person name="Yoshinaga K."/>
            <person name="Sugiura M."/>
        </authorList>
    </citation>
    <scope>NUCLEOTIDE SEQUENCE [LARGE SCALE GENOMIC DNA]</scope>
    <source>
        <strain>IAM C-27 / Tamiya</strain>
    </source>
</reference>
<proteinExistence type="inferred from homology"/>
<name>PSBB_CHLVU</name>